<keyword id="KW-0963">Cytoplasm</keyword>
<keyword id="KW-0489">Methyltransferase</keyword>
<keyword id="KW-1185">Reference proteome</keyword>
<keyword id="KW-0690">Ribosome biogenesis</keyword>
<keyword id="KW-0694">RNA-binding</keyword>
<keyword id="KW-0698">rRNA processing</keyword>
<keyword id="KW-0949">S-adenosyl-L-methionine</keyword>
<keyword id="KW-0808">Transferase</keyword>
<feature type="chain" id="PRO_0000211804" description="Ribosomal RNA small subunit methyltransferase B">
    <location>
        <begin position="1"/>
        <end position="428"/>
    </location>
</feature>
<feature type="active site" description="Nucleophile" evidence="2">
    <location>
        <position position="369"/>
    </location>
</feature>
<feature type="binding site" evidence="2">
    <location>
        <begin position="248"/>
        <end position="254"/>
    </location>
    <ligand>
        <name>S-adenosyl-L-methionine</name>
        <dbReference type="ChEBI" id="CHEBI:59789"/>
    </ligand>
</feature>
<feature type="binding site" evidence="2">
    <location>
        <position position="271"/>
    </location>
    <ligand>
        <name>S-adenosyl-L-methionine</name>
        <dbReference type="ChEBI" id="CHEBI:59789"/>
    </ligand>
</feature>
<feature type="binding site" evidence="2">
    <location>
        <position position="297"/>
    </location>
    <ligand>
        <name>S-adenosyl-L-methionine</name>
        <dbReference type="ChEBI" id="CHEBI:59789"/>
    </ligand>
</feature>
<feature type="binding site" evidence="2">
    <location>
        <position position="316"/>
    </location>
    <ligand>
        <name>S-adenosyl-L-methionine</name>
        <dbReference type="ChEBI" id="CHEBI:59789"/>
    </ligand>
</feature>
<dbReference type="EC" id="2.1.1.176"/>
<dbReference type="EMBL" id="AE014299">
    <property type="protein sequence ID" value="AAN53117.1"/>
    <property type="molecule type" value="Genomic_DNA"/>
</dbReference>
<dbReference type="RefSeq" id="NP_715672.1">
    <property type="nucleotide sequence ID" value="NC_004347.2"/>
</dbReference>
<dbReference type="RefSeq" id="WP_011070446.1">
    <property type="nucleotide sequence ID" value="NC_004347.2"/>
</dbReference>
<dbReference type="SMR" id="Q8EKR0"/>
<dbReference type="STRING" id="211586.SO_0030"/>
<dbReference type="PaxDb" id="211586-SO_0030"/>
<dbReference type="KEGG" id="son:SO_0030"/>
<dbReference type="PATRIC" id="fig|211586.12.peg.30"/>
<dbReference type="eggNOG" id="COG0144">
    <property type="taxonomic scope" value="Bacteria"/>
</dbReference>
<dbReference type="eggNOG" id="COG0781">
    <property type="taxonomic scope" value="Bacteria"/>
</dbReference>
<dbReference type="HOGENOM" id="CLU_005316_0_4_6"/>
<dbReference type="OrthoDB" id="9810297at2"/>
<dbReference type="PhylomeDB" id="Q8EKR0"/>
<dbReference type="BioCyc" id="SONE211586:G1GMP-30-MONOMER"/>
<dbReference type="Proteomes" id="UP000008186">
    <property type="component" value="Chromosome"/>
</dbReference>
<dbReference type="GO" id="GO:0005829">
    <property type="term" value="C:cytosol"/>
    <property type="evidence" value="ECO:0000318"/>
    <property type="project" value="GO_Central"/>
</dbReference>
<dbReference type="GO" id="GO:0003723">
    <property type="term" value="F:RNA binding"/>
    <property type="evidence" value="ECO:0007669"/>
    <property type="project" value="UniProtKB-KW"/>
</dbReference>
<dbReference type="GO" id="GO:0009383">
    <property type="term" value="F:rRNA (cytosine-C5-)-methyltransferase activity"/>
    <property type="evidence" value="ECO:0000318"/>
    <property type="project" value="GO_Central"/>
</dbReference>
<dbReference type="GO" id="GO:0006355">
    <property type="term" value="P:regulation of DNA-templated transcription"/>
    <property type="evidence" value="ECO:0007669"/>
    <property type="project" value="InterPro"/>
</dbReference>
<dbReference type="GO" id="GO:0070475">
    <property type="term" value="P:rRNA base methylation"/>
    <property type="evidence" value="ECO:0000318"/>
    <property type="project" value="GO_Central"/>
</dbReference>
<dbReference type="CDD" id="cd02440">
    <property type="entry name" value="AdoMet_MTases"/>
    <property type="match status" value="1"/>
</dbReference>
<dbReference type="FunFam" id="1.10.940.10:FF:000002">
    <property type="entry name" value="Ribosomal RNA small subunit methyltransferase B"/>
    <property type="match status" value="1"/>
</dbReference>
<dbReference type="FunFam" id="3.30.70.1170:FF:000002">
    <property type="entry name" value="Ribosomal RNA small subunit methyltransferase B"/>
    <property type="match status" value="1"/>
</dbReference>
<dbReference type="FunFam" id="3.40.50.150:FF:000022">
    <property type="entry name" value="Ribosomal RNA small subunit methyltransferase B"/>
    <property type="match status" value="1"/>
</dbReference>
<dbReference type="Gene3D" id="1.10.287.730">
    <property type="entry name" value="Helix hairpin bin"/>
    <property type="match status" value="1"/>
</dbReference>
<dbReference type="Gene3D" id="1.10.940.10">
    <property type="entry name" value="NusB-like"/>
    <property type="match status" value="1"/>
</dbReference>
<dbReference type="Gene3D" id="3.30.70.1170">
    <property type="entry name" value="Sun protein, domain 3"/>
    <property type="match status" value="1"/>
</dbReference>
<dbReference type="Gene3D" id="3.40.50.150">
    <property type="entry name" value="Vaccinia Virus protein VP39"/>
    <property type="match status" value="1"/>
</dbReference>
<dbReference type="InterPro" id="IPR049560">
    <property type="entry name" value="MeTrfase_RsmB-F_NOP2_cat"/>
</dbReference>
<dbReference type="InterPro" id="IPR001678">
    <property type="entry name" value="MeTrfase_RsmB-F_NOP2_dom"/>
</dbReference>
<dbReference type="InterPro" id="IPR035926">
    <property type="entry name" value="NusB-like_sf"/>
</dbReference>
<dbReference type="InterPro" id="IPR006027">
    <property type="entry name" value="NusB_RsmB_TIM44"/>
</dbReference>
<dbReference type="InterPro" id="IPR023267">
    <property type="entry name" value="RCMT"/>
</dbReference>
<dbReference type="InterPro" id="IPR004573">
    <property type="entry name" value="rRNA_ssu_MeTfrase_B"/>
</dbReference>
<dbReference type="InterPro" id="IPR054728">
    <property type="entry name" value="RsmB-like_ferredoxin"/>
</dbReference>
<dbReference type="InterPro" id="IPR018314">
    <property type="entry name" value="RsmB/NOL1/NOP2-like_CS"/>
</dbReference>
<dbReference type="InterPro" id="IPR029063">
    <property type="entry name" value="SAM-dependent_MTases_sf"/>
</dbReference>
<dbReference type="NCBIfam" id="NF008149">
    <property type="entry name" value="PRK10901.1"/>
    <property type="match status" value="1"/>
</dbReference>
<dbReference type="NCBIfam" id="NF011494">
    <property type="entry name" value="PRK14902.1"/>
    <property type="match status" value="1"/>
</dbReference>
<dbReference type="NCBIfam" id="TIGR00563">
    <property type="entry name" value="rsmB"/>
    <property type="match status" value="1"/>
</dbReference>
<dbReference type="PANTHER" id="PTHR22807:SF61">
    <property type="entry name" value="NOL1_NOP2_SUN FAMILY PROTEIN _ ANTITERMINATION NUSB DOMAIN-CONTAINING PROTEIN"/>
    <property type="match status" value="1"/>
</dbReference>
<dbReference type="PANTHER" id="PTHR22807">
    <property type="entry name" value="NOP2 YEAST -RELATED NOL1/NOP2/FMU SUN DOMAIN-CONTAINING"/>
    <property type="match status" value="1"/>
</dbReference>
<dbReference type="Pfam" id="PF01189">
    <property type="entry name" value="Methyltr_RsmB-F"/>
    <property type="match status" value="1"/>
</dbReference>
<dbReference type="Pfam" id="PF01029">
    <property type="entry name" value="NusB"/>
    <property type="match status" value="1"/>
</dbReference>
<dbReference type="Pfam" id="PF22458">
    <property type="entry name" value="RsmF-B_ferredox"/>
    <property type="match status" value="1"/>
</dbReference>
<dbReference type="PRINTS" id="PR02008">
    <property type="entry name" value="RCMTFAMILY"/>
</dbReference>
<dbReference type="SUPFAM" id="SSF48013">
    <property type="entry name" value="NusB-like"/>
    <property type="match status" value="1"/>
</dbReference>
<dbReference type="SUPFAM" id="SSF53335">
    <property type="entry name" value="S-adenosyl-L-methionine-dependent methyltransferases"/>
    <property type="match status" value="1"/>
</dbReference>
<dbReference type="PROSITE" id="PS01153">
    <property type="entry name" value="NOL1_NOP2_SUN"/>
    <property type="match status" value="1"/>
</dbReference>
<dbReference type="PROSITE" id="PS51686">
    <property type="entry name" value="SAM_MT_RSMB_NOP"/>
    <property type="match status" value="1"/>
</dbReference>
<evidence type="ECO:0000250" key="1"/>
<evidence type="ECO:0000255" key="2">
    <source>
        <dbReference type="PROSITE-ProRule" id="PRU01023"/>
    </source>
</evidence>
<evidence type="ECO:0000305" key="3"/>
<protein>
    <recommendedName>
        <fullName>Ribosomal RNA small subunit methyltransferase B</fullName>
        <ecNumber>2.1.1.176</ecNumber>
    </recommendedName>
    <alternativeName>
        <fullName>16S rRNA m5C967 methyltransferase</fullName>
    </alternativeName>
    <alternativeName>
        <fullName>rRNA (cytosine-C(5)-)-methyltransferase RsmB</fullName>
    </alternativeName>
</protein>
<name>RSMB_SHEON</name>
<gene>
    <name type="primary">rsmB</name>
    <name type="synonym">rrmB</name>
    <name type="synonym">sun</name>
    <name type="ordered locus">SO_0030</name>
</gene>
<proteinExistence type="inferred from homology"/>
<accession>Q8EKR0</accession>
<sequence>MNLRALAAKAIFDVLEKGVSLSVALPEQQKHLASGKDKALLAELCYGVMRTLPQIEKRTAECLAKPLKGKQRIIHQLLIVGCYQLYFTRIPSHAAISETAEACRQLKFEGMVKVVNGVLRNIQRQLTPLSNESETLSYNTPGWLIKRLKTAYPGNWQEIIQQSHERPPMWLRNNRLSQSRDEYLAALDKLEIDASAGLSDDAILLAAPKDVATLPLFLEGAASVQDGAAQWAATLLAPQANELILDACAAPGGKSCHLLELEPSIKLIAVDFDAKRLERVQQNLDRLSLKAEVIHGDAANIDSWWQGEQFDRILLDAPCSATGVIRRHPDIKWLRKNHDIEELAELQRQILDHCWKWLKPGGTLLYATCSILPQENRDQISAFLARTADAKLDTLVQQASSQDIGWQITPGQHNMDGFYYARLLKATH</sequence>
<comment type="function">
    <text evidence="1">Specifically methylates the cytosine at position 967 (m5C967) of 16S rRNA.</text>
</comment>
<comment type="catalytic activity">
    <reaction>
        <text>cytidine(967) in 16S rRNA + S-adenosyl-L-methionine = 5-methylcytidine(967) in 16S rRNA + S-adenosyl-L-homocysteine + H(+)</text>
        <dbReference type="Rhea" id="RHEA:42748"/>
        <dbReference type="Rhea" id="RHEA-COMP:10219"/>
        <dbReference type="Rhea" id="RHEA-COMP:10220"/>
        <dbReference type="ChEBI" id="CHEBI:15378"/>
        <dbReference type="ChEBI" id="CHEBI:57856"/>
        <dbReference type="ChEBI" id="CHEBI:59789"/>
        <dbReference type="ChEBI" id="CHEBI:74483"/>
        <dbReference type="ChEBI" id="CHEBI:82748"/>
        <dbReference type="EC" id="2.1.1.176"/>
    </reaction>
</comment>
<comment type="subcellular location">
    <subcellularLocation>
        <location evidence="3">Cytoplasm</location>
    </subcellularLocation>
</comment>
<comment type="similarity">
    <text evidence="2">Belongs to the class I-like SAM-binding methyltransferase superfamily. RsmB/NOP family.</text>
</comment>
<reference key="1">
    <citation type="journal article" date="2002" name="Nat. Biotechnol.">
        <title>Genome sequence of the dissimilatory metal ion-reducing bacterium Shewanella oneidensis.</title>
        <authorList>
            <person name="Heidelberg J.F."/>
            <person name="Paulsen I.T."/>
            <person name="Nelson K.E."/>
            <person name="Gaidos E.J."/>
            <person name="Nelson W.C."/>
            <person name="Read T.D."/>
            <person name="Eisen J.A."/>
            <person name="Seshadri R."/>
            <person name="Ward N.L."/>
            <person name="Methe B.A."/>
            <person name="Clayton R.A."/>
            <person name="Meyer T."/>
            <person name="Tsapin A."/>
            <person name="Scott J."/>
            <person name="Beanan M.J."/>
            <person name="Brinkac L.M."/>
            <person name="Daugherty S.C."/>
            <person name="DeBoy R.T."/>
            <person name="Dodson R.J."/>
            <person name="Durkin A.S."/>
            <person name="Haft D.H."/>
            <person name="Kolonay J.F."/>
            <person name="Madupu R."/>
            <person name="Peterson J.D."/>
            <person name="Umayam L.A."/>
            <person name="White O."/>
            <person name="Wolf A.M."/>
            <person name="Vamathevan J.J."/>
            <person name="Weidman J.F."/>
            <person name="Impraim M."/>
            <person name="Lee K."/>
            <person name="Berry K.J."/>
            <person name="Lee C."/>
            <person name="Mueller J."/>
            <person name="Khouri H.M."/>
            <person name="Gill J."/>
            <person name="Utterback T.R."/>
            <person name="McDonald L.A."/>
            <person name="Feldblyum T.V."/>
            <person name="Smith H.O."/>
            <person name="Venter J.C."/>
            <person name="Nealson K.H."/>
            <person name="Fraser C.M."/>
        </authorList>
    </citation>
    <scope>NUCLEOTIDE SEQUENCE [LARGE SCALE GENOMIC DNA]</scope>
    <source>
        <strain>ATCC 700550 / JCM 31522 / CIP 106686 / LMG 19005 / NCIMB 14063 / MR-1</strain>
    </source>
</reference>
<organism>
    <name type="scientific">Shewanella oneidensis (strain ATCC 700550 / JCM 31522 / CIP 106686 / LMG 19005 / NCIMB 14063 / MR-1)</name>
    <dbReference type="NCBI Taxonomy" id="211586"/>
    <lineage>
        <taxon>Bacteria</taxon>
        <taxon>Pseudomonadati</taxon>
        <taxon>Pseudomonadota</taxon>
        <taxon>Gammaproteobacteria</taxon>
        <taxon>Alteromonadales</taxon>
        <taxon>Shewanellaceae</taxon>
        <taxon>Shewanella</taxon>
    </lineage>
</organism>